<dbReference type="EMBL" id="AC093275">
    <property type="status" value="NOT_ANNOTATED_CDS"/>
    <property type="molecule type" value="Genomic_DNA"/>
</dbReference>
<dbReference type="EMBL" id="AC113423">
    <property type="status" value="NOT_ANNOTATED_CDS"/>
    <property type="molecule type" value="Genomic_DNA"/>
</dbReference>
<dbReference type="EMBL" id="BC034971">
    <property type="protein sequence ID" value="AAH34971.1"/>
    <property type="status" value="ALT_INIT"/>
    <property type="molecule type" value="mRNA"/>
</dbReference>
<dbReference type="EMBL" id="BC092489">
    <property type="protein sequence ID" value="AAH92489.1"/>
    <property type="status" value="ALT_INIT"/>
    <property type="molecule type" value="mRNA"/>
</dbReference>
<dbReference type="CCDS" id="CCDS47343.1"/>
<dbReference type="RefSeq" id="NP_001138426.1">
    <property type="nucleotide sequence ID" value="NM_001144954.2"/>
</dbReference>
<dbReference type="RefSeq" id="XP_016864517.1">
    <property type="nucleotide sequence ID" value="XM_017009028.2"/>
</dbReference>
<dbReference type="RefSeq" id="XP_054207558.1">
    <property type="nucleotide sequence ID" value="XM_054351583.1"/>
</dbReference>
<dbReference type="FunCoup" id="Q569G3">
    <property type="interactions" value="1"/>
</dbReference>
<dbReference type="STRING" id="9606.ENSP00000340887"/>
<dbReference type="iPTMnet" id="Q569G3"/>
<dbReference type="PhosphoSitePlus" id="Q569G3"/>
<dbReference type="BioMuta" id="C5orf47"/>
<dbReference type="DMDM" id="189045879"/>
<dbReference type="MassIVE" id="Q569G3"/>
<dbReference type="PaxDb" id="9606-ENSP00000340887"/>
<dbReference type="PeptideAtlas" id="Q569G3"/>
<dbReference type="ProteomicsDB" id="62569"/>
<dbReference type="DNASU" id="133491"/>
<dbReference type="Ensembl" id="ENST00000340147.7">
    <property type="protein sequence ID" value="ENSP00000340887.6"/>
    <property type="gene ID" value="ENSG00000185056.10"/>
</dbReference>
<dbReference type="GeneID" id="133491"/>
<dbReference type="KEGG" id="hsa:133491"/>
<dbReference type="MANE-Select" id="ENST00000340147.7">
    <property type="protein sequence ID" value="ENSP00000340887.6"/>
    <property type="RefSeq nucleotide sequence ID" value="NM_001144954.2"/>
    <property type="RefSeq protein sequence ID" value="NP_001138426.1"/>
</dbReference>
<dbReference type="UCSC" id="uc003mcw.4">
    <property type="organism name" value="human"/>
</dbReference>
<dbReference type="AGR" id="HGNC:27026"/>
<dbReference type="CTD" id="133491"/>
<dbReference type="DisGeNET" id="133491"/>
<dbReference type="GeneCards" id="C5orf47"/>
<dbReference type="HGNC" id="HGNC:27026">
    <property type="gene designation" value="C5orf47"/>
</dbReference>
<dbReference type="HPA" id="ENSG00000185056">
    <property type="expression patterns" value="Tissue enriched (testis)"/>
</dbReference>
<dbReference type="MIM" id="620002">
    <property type="type" value="gene"/>
</dbReference>
<dbReference type="neXtProt" id="NX_Q569G3"/>
<dbReference type="OpenTargets" id="ENSG00000185056"/>
<dbReference type="PharmGKB" id="PA162380318"/>
<dbReference type="VEuPathDB" id="HostDB:ENSG00000185056"/>
<dbReference type="eggNOG" id="ENOG502T1NK">
    <property type="taxonomic scope" value="Eukaryota"/>
</dbReference>
<dbReference type="GeneTree" id="ENSGT00640000091672"/>
<dbReference type="HOGENOM" id="CLU_1495669_0_0_1"/>
<dbReference type="InParanoid" id="Q569G3"/>
<dbReference type="OMA" id="GAGCRQE"/>
<dbReference type="OrthoDB" id="9392174at2759"/>
<dbReference type="PAN-GO" id="Q569G3">
    <property type="GO annotations" value="0 GO annotations based on evolutionary models"/>
</dbReference>
<dbReference type="PhylomeDB" id="Q569G3"/>
<dbReference type="TreeFam" id="TF337018"/>
<dbReference type="PathwayCommons" id="Q569G3"/>
<dbReference type="BioGRID-ORCS" id="133491">
    <property type="hits" value="10 hits in 1123 CRISPR screens"/>
</dbReference>
<dbReference type="ChiTaRS" id="C5orf47">
    <property type="organism name" value="human"/>
</dbReference>
<dbReference type="GenomeRNAi" id="133491"/>
<dbReference type="Pharos" id="Q569G3">
    <property type="development level" value="Tdark"/>
</dbReference>
<dbReference type="PRO" id="PR:Q569G3"/>
<dbReference type="Proteomes" id="UP000005640">
    <property type="component" value="Chromosome 5"/>
</dbReference>
<dbReference type="RNAct" id="Q569G3">
    <property type="molecule type" value="protein"/>
</dbReference>
<dbReference type="Bgee" id="ENSG00000185056">
    <property type="expression patterns" value="Expressed in primordial germ cell in gonad and 43 other cell types or tissues"/>
</dbReference>
<dbReference type="InterPro" id="IPR031464">
    <property type="entry name" value="DUF4680"/>
</dbReference>
<dbReference type="PANTHER" id="PTHR38655">
    <property type="entry name" value="SIMILAR TO RIKEN CDNA 4930524B15"/>
    <property type="match status" value="1"/>
</dbReference>
<dbReference type="PANTHER" id="PTHR38655:SF1">
    <property type="entry name" value="SIMILAR TO RIKEN CDNA 4930524B15"/>
    <property type="match status" value="1"/>
</dbReference>
<dbReference type="Pfam" id="PF15730">
    <property type="entry name" value="DUF4680"/>
    <property type="match status" value="1"/>
</dbReference>
<reference key="1">
    <citation type="journal article" date="2004" name="Nature">
        <title>The DNA sequence and comparative analysis of human chromosome 5.</title>
        <authorList>
            <person name="Schmutz J."/>
            <person name="Martin J."/>
            <person name="Terry A."/>
            <person name="Couronne O."/>
            <person name="Grimwood J."/>
            <person name="Lowry S."/>
            <person name="Gordon L.A."/>
            <person name="Scott D."/>
            <person name="Xie G."/>
            <person name="Huang W."/>
            <person name="Hellsten U."/>
            <person name="Tran-Gyamfi M."/>
            <person name="She X."/>
            <person name="Prabhakar S."/>
            <person name="Aerts A."/>
            <person name="Altherr M."/>
            <person name="Bajorek E."/>
            <person name="Black S."/>
            <person name="Branscomb E."/>
            <person name="Caoile C."/>
            <person name="Challacombe J.F."/>
            <person name="Chan Y.M."/>
            <person name="Denys M."/>
            <person name="Detter J.C."/>
            <person name="Escobar J."/>
            <person name="Flowers D."/>
            <person name="Fotopulos D."/>
            <person name="Glavina T."/>
            <person name="Gomez M."/>
            <person name="Gonzales E."/>
            <person name="Goodstein D."/>
            <person name="Grigoriev I."/>
            <person name="Groza M."/>
            <person name="Hammon N."/>
            <person name="Hawkins T."/>
            <person name="Haydu L."/>
            <person name="Israni S."/>
            <person name="Jett J."/>
            <person name="Kadner K."/>
            <person name="Kimball H."/>
            <person name="Kobayashi A."/>
            <person name="Lopez F."/>
            <person name="Lou Y."/>
            <person name="Martinez D."/>
            <person name="Medina C."/>
            <person name="Morgan J."/>
            <person name="Nandkeshwar R."/>
            <person name="Noonan J.P."/>
            <person name="Pitluck S."/>
            <person name="Pollard M."/>
            <person name="Predki P."/>
            <person name="Priest J."/>
            <person name="Ramirez L."/>
            <person name="Retterer J."/>
            <person name="Rodriguez A."/>
            <person name="Rogers S."/>
            <person name="Salamov A."/>
            <person name="Salazar A."/>
            <person name="Thayer N."/>
            <person name="Tice H."/>
            <person name="Tsai M."/>
            <person name="Ustaszewska A."/>
            <person name="Vo N."/>
            <person name="Wheeler J."/>
            <person name="Wu K."/>
            <person name="Yang J."/>
            <person name="Dickson M."/>
            <person name="Cheng J.-F."/>
            <person name="Eichler E.E."/>
            <person name="Olsen A."/>
            <person name="Pennacchio L.A."/>
            <person name="Rokhsar D.S."/>
            <person name="Richardson P."/>
            <person name="Lucas S.M."/>
            <person name="Myers R.M."/>
            <person name="Rubin E.M."/>
        </authorList>
    </citation>
    <scope>NUCLEOTIDE SEQUENCE [LARGE SCALE GENOMIC DNA]</scope>
</reference>
<reference key="2">
    <citation type="journal article" date="2004" name="Genome Res.">
        <title>The status, quality, and expansion of the NIH full-length cDNA project: the Mammalian Gene Collection (MGC).</title>
        <authorList>
            <consortium name="The MGC Project Team"/>
        </authorList>
    </citation>
    <scope>NUCLEOTIDE SEQUENCE [LARGE SCALE MRNA]</scope>
    <source>
        <tissue>Testis</tissue>
    </source>
</reference>
<organism>
    <name type="scientific">Homo sapiens</name>
    <name type="common">Human</name>
    <dbReference type="NCBI Taxonomy" id="9606"/>
    <lineage>
        <taxon>Eukaryota</taxon>
        <taxon>Metazoa</taxon>
        <taxon>Chordata</taxon>
        <taxon>Craniata</taxon>
        <taxon>Vertebrata</taxon>
        <taxon>Euteleostomi</taxon>
        <taxon>Mammalia</taxon>
        <taxon>Eutheria</taxon>
        <taxon>Euarchontoglires</taxon>
        <taxon>Primates</taxon>
        <taxon>Haplorrhini</taxon>
        <taxon>Catarrhini</taxon>
        <taxon>Hominidae</taxon>
        <taxon>Homo</taxon>
    </lineage>
</organism>
<accession>Q569G3</accession>
<accession>Q8IYU7</accession>
<evidence type="ECO:0000256" key="1">
    <source>
        <dbReference type="SAM" id="MobiDB-lite"/>
    </source>
</evidence>
<evidence type="ECO:0000305" key="2"/>
<gene>
    <name type="primary">C5orf47</name>
</gene>
<keyword id="KW-1267">Proteomics identification</keyword>
<keyword id="KW-1185">Reference proteome</keyword>
<feature type="chain" id="PRO_0000321821" description="Uncharacterized protein C5orf47">
    <location>
        <begin position="1"/>
        <end position="176"/>
    </location>
</feature>
<feature type="region of interest" description="Disordered" evidence="1">
    <location>
        <begin position="87"/>
        <end position="109"/>
    </location>
</feature>
<feature type="compositionally biased region" description="Low complexity" evidence="1">
    <location>
        <begin position="87"/>
        <end position="100"/>
    </location>
</feature>
<sequence length="176" mass="19206">MAAAGRGREQDSARFVYVTRFGSHQCSGVLQLGGRGAQGLWGQGPGAGCRQEKPREAMAVAGVQGGSELPLGSQLRVPTTPGVEAAASASSQLRASRVQSGTRQSARAGLIQKDAAKKYDFPIPLNEASKIMKKKKKVLVWNRVYKVISRMLEENEKYRHRLKCQRLSSESSNYTR</sequence>
<protein>
    <recommendedName>
        <fullName>Uncharacterized protein C5orf47</fullName>
    </recommendedName>
</protein>
<proteinExistence type="evidence at protein level"/>
<comment type="sequence caution" evidence="2">
    <conflict type="erroneous initiation">
        <sequence resource="EMBL-CDS" id="AAH34971"/>
    </conflict>
</comment>
<comment type="sequence caution" evidence="2">
    <conflict type="erroneous initiation">
        <sequence resource="EMBL-CDS" id="AAH92489"/>
    </conflict>
</comment>
<name>CE047_HUMAN</name>